<reference key="1">
    <citation type="journal article" date="1995" name="Plant Mol. Biol. Rep.">
        <title>The chloroplast genome of a chlorophyll a+c-containing alga, Odontella sinensis.</title>
        <authorList>
            <person name="Kowallik K.V."/>
            <person name="Stoebe B."/>
            <person name="Schaffran I."/>
            <person name="Kroth-Pancic P."/>
            <person name="Freier U."/>
        </authorList>
    </citation>
    <scope>NUCLEOTIDE SEQUENCE [LARGE SCALE GENOMIC DNA]</scope>
</reference>
<evidence type="ECO:0000255" key="1">
    <source>
        <dbReference type="HAMAP-Rule" id="MF_01495"/>
    </source>
</evidence>
<geneLocation type="chloroplast"/>
<organism>
    <name type="scientific">Trieres chinensis</name>
    <name type="common">Marine centric diatom</name>
    <name type="synonym">Odontella sinensis</name>
    <dbReference type="NCBI Taxonomy" id="1514140"/>
    <lineage>
        <taxon>Eukaryota</taxon>
        <taxon>Sar</taxon>
        <taxon>Stramenopiles</taxon>
        <taxon>Ochrophyta</taxon>
        <taxon>Bacillariophyta</taxon>
        <taxon>Mediophyceae</taxon>
        <taxon>Biddulphiophycidae</taxon>
        <taxon>Eupodiscales</taxon>
        <taxon>Parodontellaceae</taxon>
        <taxon>Trieres</taxon>
    </lineage>
</organism>
<protein>
    <recommendedName>
        <fullName evidence="1">Photosystem II CP47 reaction center protein</fullName>
    </recommendedName>
    <alternativeName>
        <fullName evidence="1">PSII 47 kDa protein</fullName>
    </alternativeName>
    <alternativeName>
        <fullName evidence="1">Protein CP-47</fullName>
    </alternativeName>
</protein>
<keyword id="KW-0148">Chlorophyll</keyword>
<keyword id="KW-0150">Chloroplast</keyword>
<keyword id="KW-0157">Chromophore</keyword>
<keyword id="KW-0472">Membrane</keyword>
<keyword id="KW-0602">Photosynthesis</keyword>
<keyword id="KW-0604">Photosystem II</keyword>
<keyword id="KW-0934">Plastid</keyword>
<keyword id="KW-0793">Thylakoid</keyword>
<keyword id="KW-0812">Transmembrane</keyword>
<keyword id="KW-1133">Transmembrane helix</keyword>
<dbReference type="EMBL" id="Z67753">
    <property type="protein sequence ID" value="CAA91695.1"/>
    <property type="molecule type" value="Genomic_DNA"/>
</dbReference>
<dbReference type="PIR" id="S78322">
    <property type="entry name" value="S78322"/>
</dbReference>
<dbReference type="RefSeq" id="NP_043663.1">
    <property type="nucleotide sequence ID" value="NC_001713.1"/>
</dbReference>
<dbReference type="SMR" id="P49471"/>
<dbReference type="GeneID" id="801827"/>
<dbReference type="GO" id="GO:0009535">
    <property type="term" value="C:chloroplast thylakoid membrane"/>
    <property type="evidence" value="ECO:0007669"/>
    <property type="project" value="UniProtKB-SubCell"/>
</dbReference>
<dbReference type="GO" id="GO:0009523">
    <property type="term" value="C:photosystem II"/>
    <property type="evidence" value="ECO:0007669"/>
    <property type="project" value="UniProtKB-KW"/>
</dbReference>
<dbReference type="GO" id="GO:0016168">
    <property type="term" value="F:chlorophyll binding"/>
    <property type="evidence" value="ECO:0007669"/>
    <property type="project" value="UniProtKB-UniRule"/>
</dbReference>
<dbReference type="GO" id="GO:0045156">
    <property type="term" value="F:electron transporter, transferring electrons within the cyclic electron transport pathway of photosynthesis activity"/>
    <property type="evidence" value="ECO:0007669"/>
    <property type="project" value="InterPro"/>
</dbReference>
<dbReference type="GO" id="GO:0009772">
    <property type="term" value="P:photosynthetic electron transport in photosystem II"/>
    <property type="evidence" value="ECO:0007669"/>
    <property type="project" value="InterPro"/>
</dbReference>
<dbReference type="Gene3D" id="3.10.680.10">
    <property type="entry name" value="Photosystem II CP47 reaction center protein"/>
    <property type="match status" value="1"/>
</dbReference>
<dbReference type="HAMAP" id="MF_01495">
    <property type="entry name" value="PSII_PsbB_CP47"/>
    <property type="match status" value="1"/>
</dbReference>
<dbReference type="InterPro" id="IPR000932">
    <property type="entry name" value="PS_antenna-like"/>
</dbReference>
<dbReference type="InterPro" id="IPR036001">
    <property type="entry name" value="PS_II_antenna-like_sf"/>
</dbReference>
<dbReference type="InterPro" id="IPR017486">
    <property type="entry name" value="PSII_PsbB"/>
</dbReference>
<dbReference type="NCBIfam" id="TIGR03039">
    <property type="entry name" value="PS_II_CP47"/>
    <property type="match status" value="1"/>
</dbReference>
<dbReference type="Pfam" id="PF00421">
    <property type="entry name" value="PSII"/>
    <property type="match status" value="1"/>
</dbReference>
<dbReference type="SUPFAM" id="SSF161077">
    <property type="entry name" value="Photosystem II antenna protein-like"/>
    <property type="match status" value="1"/>
</dbReference>
<name>PSBB_TRICV</name>
<proteinExistence type="inferred from homology"/>
<feature type="chain" id="PRO_0000077489" description="Photosystem II CP47 reaction center protein">
    <location>
        <begin position="1"/>
        <end position="509"/>
    </location>
</feature>
<feature type="transmembrane region" description="Helical" evidence="1">
    <location>
        <begin position="21"/>
        <end position="36"/>
    </location>
</feature>
<feature type="transmembrane region" description="Helical" evidence="1">
    <location>
        <begin position="101"/>
        <end position="115"/>
    </location>
</feature>
<feature type="transmembrane region" description="Helical" evidence="1">
    <location>
        <begin position="140"/>
        <end position="156"/>
    </location>
</feature>
<feature type="transmembrane region" description="Helical" evidence="1">
    <location>
        <begin position="203"/>
        <end position="218"/>
    </location>
</feature>
<feature type="transmembrane region" description="Helical" evidence="1">
    <location>
        <begin position="237"/>
        <end position="252"/>
    </location>
</feature>
<feature type="transmembrane region" description="Helical" evidence="1">
    <location>
        <begin position="457"/>
        <end position="472"/>
    </location>
</feature>
<sequence length="509" mass="56358">MALPWYRVHTVVLNDPGRLIAVHLMHTALVAGWAGSMALYELAVFDPSDPVLNPMWRQGMFVMPFMTRLGITDSWGGWSITGESVSNPGIWSFEGVALSHIILSGMCFLAAIWHWVYWDLELFRDPRTGEPALDLPKIFGIHLFLSGLLCFGFGAFHVTGLFGPGIWVSDAYGVTGKVQPVAPAWGADGFNPFNPGGIAAHHIAAGIFGIFAGIFHLTVRPPQRLYRALRMGNIETVLSSSIAAVFFAAFVTSGTMWYGAAATPIELFGPTRYQWDSGYFQQEIERQVETSVSEGLSESQAWSRIPDKLAFYDYIGNNPAKGGLFRAGPMNKGDGIAEAWLGHPIFRDKDGRELTVRRMPAFFETFPVILVDKDGIIRADIPFRRAESKYSIEQVGVTVDFYGGKLNGQTFKDAPTVKKFARKAQLGEVFEFDRTSLESDGVFRSSPRGWYTFGHANFALLFFFGHLWHGGRTIFRDVFTGIGAEVTEQVEFGAFQKLGDKSTKKQGAV</sequence>
<accession>P49471</accession>
<gene>
    <name evidence="1" type="primary">psbB</name>
</gene>
<comment type="function">
    <text evidence="1">One of the components of the core complex of photosystem II (PSII). It binds chlorophyll and helps catalyze the primary light-induced photochemical processes of PSII. PSII is a light-driven water:plastoquinone oxidoreductase, using light energy to abstract electrons from H(2)O, generating O(2) and a proton gradient subsequently used for ATP formation.</text>
</comment>
<comment type="cofactor">
    <text evidence="1">Binds multiple chlorophylls. PSII binds additional chlorophylls, carotenoids and specific lipids.</text>
</comment>
<comment type="subunit">
    <text evidence="1">PSII is composed of 1 copy each of membrane proteins PsbA, PsbB, PsbC, PsbD, PsbE, PsbF, PsbH, PsbI, PsbJ, PsbK, PsbL, PsbM, PsbT, PsbX, PsbY, PsbZ, Psb30/Ycf12, at least 3 peripheral proteins of the oxygen-evolving complex and a large number of cofactors. It forms dimeric complexes.</text>
</comment>
<comment type="subcellular location">
    <subcellularLocation>
        <location evidence="1">Plastid</location>
        <location evidence="1">Chloroplast thylakoid membrane</location>
        <topology evidence="1">Multi-pass membrane protein</topology>
    </subcellularLocation>
</comment>
<comment type="similarity">
    <text evidence="1">Belongs to the PsbB/PsbC family. PsbB subfamily.</text>
</comment>